<gene>
    <name evidence="1" type="primary">lnt</name>
    <name type="ordered locus">NGR_c00460</name>
</gene>
<proteinExistence type="inferred from homology"/>
<protein>
    <recommendedName>
        <fullName evidence="1">Apolipoprotein N-acyltransferase</fullName>
        <shortName evidence="1">ALP N-acyltransferase</shortName>
        <ecNumber evidence="1">2.3.1.269</ecNumber>
    </recommendedName>
</protein>
<reference key="1">
    <citation type="journal article" date="2009" name="Appl. Environ. Microbiol.">
        <title>Rhizobium sp. strain NGR234 possesses a remarkable number of secretion systems.</title>
        <authorList>
            <person name="Schmeisser C."/>
            <person name="Liesegang H."/>
            <person name="Krysciak D."/>
            <person name="Bakkou N."/>
            <person name="Le Quere A."/>
            <person name="Wollherr A."/>
            <person name="Heinemeyer I."/>
            <person name="Morgenstern B."/>
            <person name="Pommerening-Roeser A."/>
            <person name="Flores M."/>
            <person name="Palacios R."/>
            <person name="Brenner S."/>
            <person name="Gottschalk G."/>
            <person name="Schmitz R.A."/>
            <person name="Broughton W.J."/>
            <person name="Perret X."/>
            <person name="Strittmatter A.W."/>
            <person name="Streit W.R."/>
        </authorList>
    </citation>
    <scope>NUCLEOTIDE SEQUENCE [LARGE SCALE GENOMIC DNA]</scope>
    <source>
        <strain>NBRC 101917 / NGR234</strain>
    </source>
</reference>
<dbReference type="EC" id="2.3.1.269" evidence="1"/>
<dbReference type="EMBL" id="CP001389">
    <property type="protein sequence ID" value="ACP23850.1"/>
    <property type="molecule type" value="Genomic_DNA"/>
</dbReference>
<dbReference type="RefSeq" id="WP_012706635.1">
    <property type="nucleotide sequence ID" value="NC_012587.1"/>
</dbReference>
<dbReference type="RefSeq" id="YP_002824603.1">
    <property type="nucleotide sequence ID" value="NC_012587.1"/>
</dbReference>
<dbReference type="SMR" id="C3MF13"/>
<dbReference type="STRING" id="394.NGR_c00460"/>
<dbReference type="KEGG" id="rhi:NGR_c00460"/>
<dbReference type="PATRIC" id="fig|394.7.peg.2838"/>
<dbReference type="eggNOG" id="COG0815">
    <property type="taxonomic scope" value="Bacteria"/>
</dbReference>
<dbReference type="HOGENOM" id="CLU_019563_3_1_5"/>
<dbReference type="OrthoDB" id="9804277at2"/>
<dbReference type="UniPathway" id="UPA00666"/>
<dbReference type="Proteomes" id="UP000001054">
    <property type="component" value="Chromosome"/>
</dbReference>
<dbReference type="GO" id="GO:0005886">
    <property type="term" value="C:plasma membrane"/>
    <property type="evidence" value="ECO:0007669"/>
    <property type="project" value="UniProtKB-SubCell"/>
</dbReference>
<dbReference type="GO" id="GO:0016410">
    <property type="term" value="F:N-acyltransferase activity"/>
    <property type="evidence" value="ECO:0007669"/>
    <property type="project" value="UniProtKB-UniRule"/>
</dbReference>
<dbReference type="GO" id="GO:0042158">
    <property type="term" value="P:lipoprotein biosynthetic process"/>
    <property type="evidence" value="ECO:0007669"/>
    <property type="project" value="UniProtKB-UniRule"/>
</dbReference>
<dbReference type="CDD" id="cd07571">
    <property type="entry name" value="ALP_N-acyl_transferase"/>
    <property type="match status" value="1"/>
</dbReference>
<dbReference type="Gene3D" id="3.60.110.10">
    <property type="entry name" value="Carbon-nitrogen hydrolase"/>
    <property type="match status" value="1"/>
</dbReference>
<dbReference type="HAMAP" id="MF_01148">
    <property type="entry name" value="Lnt"/>
    <property type="match status" value="1"/>
</dbReference>
<dbReference type="InterPro" id="IPR004563">
    <property type="entry name" value="Apolipo_AcylTrfase"/>
</dbReference>
<dbReference type="InterPro" id="IPR003010">
    <property type="entry name" value="C-N_Hydrolase"/>
</dbReference>
<dbReference type="InterPro" id="IPR036526">
    <property type="entry name" value="C-N_Hydrolase_sf"/>
</dbReference>
<dbReference type="InterPro" id="IPR045378">
    <property type="entry name" value="LNT_N"/>
</dbReference>
<dbReference type="NCBIfam" id="TIGR00546">
    <property type="entry name" value="lnt"/>
    <property type="match status" value="1"/>
</dbReference>
<dbReference type="PANTHER" id="PTHR38686">
    <property type="entry name" value="APOLIPOPROTEIN N-ACYLTRANSFERASE"/>
    <property type="match status" value="1"/>
</dbReference>
<dbReference type="PANTHER" id="PTHR38686:SF1">
    <property type="entry name" value="APOLIPOPROTEIN N-ACYLTRANSFERASE"/>
    <property type="match status" value="1"/>
</dbReference>
<dbReference type="Pfam" id="PF00795">
    <property type="entry name" value="CN_hydrolase"/>
    <property type="match status" value="1"/>
</dbReference>
<dbReference type="Pfam" id="PF20154">
    <property type="entry name" value="LNT_N"/>
    <property type="match status" value="1"/>
</dbReference>
<dbReference type="SUPFAM" id="SSF56317">
    <property type="entry name" value="Carbon-nitrogen hydrolase"/>
    <property type="match status" value="1"/>
</dbReference>
<dbReference type="PROSITE" id="PS50263">
    <property type="entry name" value="CN_HYDROLASE"/>
    <property type="match status" value="1"/>
</dbReference>
<sequence length="531" mass="56976">MERLAGKIILLSGASRAFVGFLAGLLAMFAQPPFGIFAAAFISFPMLVWLIDGVATHPDEGVVRRLLPAASIGWSFGFGYFLGGLWWLGNAFLVEADLFAWAMPLAVVGLPAVLALFYALAVLVARCLWSDGVGRIAALAVGFGVAEWLRSFLFTGFPWNAIGYAAMPMPLMMQSASVLNVATINMLAVFVFAAPALIGTGKGARVGLAVAAALFAAHIGYGYYRLSLPPPQPLTPERTVRLVQPVIDQAKKMDDRERAVIFEEHLALTAAPPQAGGKRPDIVVWPETSIPFILTDNPDALARIADVLQDGQILVAGAVRAEDAGTGLPPRYYNSIYVIDDRGQIVGASDKVHLVPFGEYLPFEDVLNSWGLSSIAANMPGGFSAASNRSVLTLPGGRTFYPLICYEAIFADEVDGSARLSDALLNVTNDAWFGDTPGPRQHFHQAQLRTIETGLPMIRAANTGISAIVDARGVLVVGLGYNYKGVTDAILPGKMPTMTDSMLRGRIFWFTGVFLLLVAAISRRGLNFRTN</sequence>
<keyword id="KW-0012">Acyltransferase</keyword>
<keyword id="KW-0997">Cell inner membrane</keyword>
<keyword id="KW-1003">Cell membrane</keyword>
<keyword id="KW-0472">Membrane</keyword>
<keyword id="KW-1185">Reference proteome</keyword>
<keyword id="KW-0808">Transferase</keyword>
<keyword id="KW-0812">Transmembrane</keyword>
<keyword id="KW-1133">Transmembrane helix</keyword>
<comment type="function">
    <text evidence="1">Catalyzes the phospholipid dependent N-acylation of the N-terminal cysteine of apolipoprotein, the last step in lipoprotein maturation.</text>
</comment>
<comment type="catalytic activity">
    <reaction evidence="1">
        <text>N-terminal S-1,2-diacyl-sn-glyceryl-L-cysteinyl-[lipoprotein] + a glycerophospholipid = N-acyl-S-1,2-diacyl-sn-glyceryl-L-cysteinyl-[lipoprotein] + a 2-acyl-sn-glycero-3-phospholipid + H(+)</text>
        <dbReference type="Rhea" id="RHEA:48228"/>
        <dbReference type="Rhea" id="RHEA-COMP:14681"/>
        <dbReference type="Rhea" id="RHEA-COMP:14684"/>
        <dbReference type="ChEBI" id="CHEBI:15378"/>
        <dbReference type="ChEBI" id="CHEBI:136912"/>
        <dbReference type="ChEBI" id="CHEBI:140656"/>
        <dbReference type="ChEBI" id="CHEBI:140657"/>
        <dbReference type="ChEBI" id="CHEBI:140660"/>
        <dbReference type="EC" id="2.3.1.269"/>
    </reaction>
</comment>
<comment type="pathway">
    <text evidence="1">Protein modification; lipoprotein biosynthesis (N-acyl transfer).</text>
</comment>
<comment type="subcellular location">
    <subcellularLocation>
        <location evidence="1">Cell inner membrane</location>
        <topology evidence="1">Multi-pass membrane protein</topology>
    </subcellularLocation>
</comment>
<comment type="similarity">
    <text evidence="1">Belongs to the CN hydrolase family. Apolipoprotein N-acyltransferase subfamily.</text>
</comment>
<name>LNT_SINFN</name>
<accession>C3MF13</accession>
<organism>
    <name type="scientific">Sinorhizobium fredii (strain NBRC 101917 / NGR234)</name>
    <dbReference type="NCBI Taxonomy" id="394"/>
    <lineage>
        <taxon>Bacteria</taxon>
        <taxon>Pseudomonadati</taxon>
        <taxon>Pseudomonadota</taxon>
        <taxon>Alphaproteobacteria</taxon>
        <taxon>Hyphomicrobiales</taxon>
        <taxon>Rhizobiaceae</taxon>
        <taxon>Sinorhizobium/Ensifer group</taxon>
        <taxon>Sinorhizobium</taxon>
    </lineage>
</organism>
<evidence type="ECO:0000255" key="1">
    <source>
        <dbReference type="HAMAP-Rule" id="MF_01148"/>
    </source>
</evidence>
<feature type="chain" id="PRO_1000164162" description="Apolipoprotein N-acyltransferase">
    <location>
        <begin position="1"/>
        <end position="531"/>
    </location>
</feature>
<feature type="transmembrane region" description="Helical" evidence="1">
    <location>
        <begin position="8"/>
        <end position="28"/>
    </location>
</feature>
<feature type="transmembrane region" description="Helical" evidence="1">
    <location>
        <begin position="34"/>
        <end position="54"/>
    </location>
</feature>
<feature type="transmembrane region" description="Helical" evidence="1">
    <location>
        <begin position="74"/>
        <end position="94"/>
    </location>
</feature>
<feature type="transmembrane region" description="Helical" evidence="1">
    <location>
        <begin position="105"/>
        <end position="125"/>
    </location>
</feature>
<feature type="transmembrane region" description="Helical" evidence="1">
    <location>
        <begin position="128"/>
        <end position="148"/>
    </location>
</feature>
<feature type="transmembrane region" description="Helical" evidence="1">
    <location>
        <begin position="178"/>
        <end position="198"/>
    </location>
</feature>
<feature type="transmembrane region" description="Helical" evidence="1">
    <location>
        <begin position="206"/>
        <end position="226"/>
    </location>
</feature>
<feature type="transmembrane region" description="Helical" evidence="1">
    <location>
        <begin position="501"/>
        <end position="521"/>
    </location>
</feature>
<feature type="domain" description="CN hydrolase" evidence="1">
    <location>
        <begin position="243"/>
        <end position="493"/>
    </location>
</feature>
<feature type="active site" description="Proton acceptor" evidence="1">
    <location>
        <position position="287"/>
    </location>
</feature>
<feature type="active site" evidence="1">
    <location>
        <position position="351"/>
    </location>
</feature>
<feature type="active site" description="Nucleophile" evidence="1">
    <location>
        <position position="405"/>
    </location>
</feature>